<feature type="propeptide" id="PRO_0000448784" evidence="12">
    <location>
        <begin position="1"/>
        <end position="171"/>
    </location>
</feature>
<feature type="chain" id="PRO_0000448785" description="Caspase b subunit p20" evidence="12 13">
    <location>
        <begin position="172"/>
        <end position="300"/>
    </location>
</feature>
<feature type="propeptide" id="PRO_0000448786" evidence="11">
    <location>
        <begin position="301"/>
        <end position="316"/>
    </location>
</feature>
<feature type="chain" id="PRO_0000448787" description="Caspase b subunit p10" evidence="12 13">
    <location>
        <begin position="317"/>
        <end position="404"/>
    </location>
</feature>
<feature type="domain" description="Pyrin" evidence="3">
    <location>
        <begin position="8"/>
        <end position="80"/>
    </location>
</feature>
<feature type="active site" evidence="1">
    <location>
        <position position="249"/>
    </location>
</feature>
<feature type="active site" evidence="9">
    <location>
        <position position="296"/>
    </location>
</feature>
<feature type="mutagenesis site" description="Abolishes catalytic activity. Abolishes pyroptosis induced by bacterial lipopolysaccharides (LPS)." evidence="9">
    <original>C</original>
    <variation>A</variation>
    <location>
        <position position="296"/>
    </location>
</feature>
<feature type="sequence conflict" description="In Ref. 3; AAY44398 and 2; AAG45230." evidence="11" ref="3 2">
    <original>S</original>
    <variation>A</variation>
    <location>
        <position position="18"/>
    </location>
</feature>
<feature type="sequence conflict" description="In Ref. 2; AAG45230." evidence="11" ref="2">
    <original>N</original>
    <variation>D</variation>
    <location>
        <position position="192"/>
    </location>
</feature>
<feature type="sequence conflict" description="In Ref. 2; AAG45230." evidence="11" ref="2">
    <original>I</original>
    <variation>M</variation>
    <location>
        <position position="213"/>
    </location>
</feature>
<feature type="sequence conflict" description="In Ref. 2; AAG45230." evidence="11" ref="2">
    <original>S</original>
    <variation>A</variation>
    <location>
        <position position="274"/>
    </location>
</feature>
<feature type="sequence conflict" description="In Ref. 3; AAY44398 and 2; AAG45230." evidence="11" ref="3 2">
    <original>Q</original>
    <variation>K</variation>
    <location>
        <position position="380"/>
    </location>
</feature>
<keyword id="KW-0053">Apoptosis</keyword>
<keyword id="KW-0963">Cytoplasm</keyword>
<keyword id="KW-0378">Hydrolase</keyword>
<keyword id="KW-0391">Immunity</keyword>
<keyword id="KW-1271">Inflammasome</keyword>
<keyword id="KW-0395">Inflammatory response</keyword>
<keyword id="KW-0399">Innate immunity</keyword>
<keyword id="KW-1210">Necrosis</keyword>
<keyword id="KW-0645">Protease</keyword>
<keyword id="KW-1185">Reference proteome</keyword>
<keyword id="KW-0788">Thiol protease</keyword>
<keyword id="KW-0865">Zymogen</keyword>
<dbReference type="EC" id="3.4.22.58" evidence="5 9"/>
<dbReference type="EMBL" id="MG958005">
    <property type="protein sequence ID" value="AWP39899.1"/>
    <property type="molecule type" value="mRNA"/>
</dbReference>
<dbReference type="EMBL" id="AF327410">
    <property type="protein sequence ID" value="AAG45230.1"/>
    <property type="molecule type" value="mRNA"/>
</dbReference>
<dbReference type="EMBL" id="DQ022755">
    <property type="protein sequence ID" value="AAY44398.1"/>
    <property type="molecule type" value="mRNA"/>
</dbReference>
<dbReference type="EMBL" id="BX469930">
    <property type="status" value="NOT_ANNOTATED_CDS"/>
    <property type="molecule type" value="Genomic_DNA"/>
</dbReference>
<dbReference type="EMBL" id="BC095000">
    <property type="protein sequence ID" value="AAH95000.1"/>
    <property type="molecule type" value="mRNA"/>
</dbReference>
<dbReference type="EMBL" id="BC164498">
    <property type="protein sequence ID" value="AAI64498.1"/>
    <property type="molecule type" value="mRNA"/>
</dbReference>
<dbReference type="RefSeq" id="NP_690840.2">
    <property type="nucleotide sequence ID" value="NM_152884.2"/>
</dbReference>
<dbReference type="SMR" id="Q504J1"/>
<dbReference type="ComplexPortal" id="CPX-4948">
    <property type="entry name" value="NLRP1 inflammasome, variant 2"/>
</dbReference>
<dbReference type="FunCoup" id="Q504J1">
    <property type="interactions" value="5"/>
</dbReference>
<dbReference type="STRING" id="7955.ENSDARP00000068268"/>
<dbReference type="MEROPS" id="C14.031"/>
<dbReference type="PaxDb" id="7955-ENSDARP00000068268"/>
<dbReference type="Ensembl" id="ENSDART00000073778">
    <property type="protein sequence ID" value="ENSDARP00000068268"/>
    <property type="gene ID" value="ENSDARG00000052039"/>
</dbReference>
<dbReference type="Ensembl" id="ENSDART00000160970">
    <property type="protein sequence ID" value="ENSDARP00000134896"/>
    <property type="gene ID" value="ENSDARG00000052039"/>
</dbReference>
<dbReference type="GeneID" id="259303"/>
<dbReference type="KEGG" id="dre:259303"/>
<dbReference type="AGR" id="ZFIN:ZDB-GENE-020812-1"/>
<dbReference type="CTD" id="259303"/>
<dbReference type="ZFIN" id="ZDB-GENE-020812-1">
    <property type="gene designation" value="caspb"/>
</dbReference>
<dbReference type="eggNOG" id="KOG3573">
    <property type="taxonomic scope" value="Eukaryota"/>
</dbReference>
<dbReference type="HOGENOM" id="CLU_036904_0_1_1"/>
<dbReference type="InParanoid" id="Q504J1"/>
<dbReference type="OMA" id="YSWCCHV"/>
<dbReference type="OrthoDB" id="6097640at2759"/>
<dbReference type="TreeFam" id="TF102023"/>
<dbReference type="PRO" id="PR:Q504J1"/>
<dbReference type="Proteomes" id="UP000000437">
    <property type="component" value="Chromosome 1"/>
</dbReference>
<dbReference type="Bgee" id="ENSDARG00000052039">
    <property type="expression patterns" value="Expressed in pharyngeal gill and 18 other cell types or tissues"/>
</dbReference>
<dbReference type="GO" id="GO:0061702">
    <property type="term" value="C:canonical inflammasome complex"/>
    <property type="evidence" value="ECO:0000353"/>
    <property type="project" value="ZFIN"/>
</dbReference>
<dbReference type="GO" id="GO:0005737">
    <property type="term" value="C:cytoplasm"/>
    <property type="evidence" value="ECO:0000318"/>
    <property type="project" value="GO_Central"/>
</dbReference>
<dbReference type="GO" id="GO:0005829">
    <property type="term" value="C:cytosol"/>
    <property type="evidence" value="ECO:0000318"/>
    <property type="project" value="GO_Central"/>
</dbReference>
<dbReference type="GO" id="GO:0072558">
    <property type="term" value="C:NLRP1 inflammasome complex"/>
    <property type="evidence" value="ECO:0000353"/>
    <property type="project" value="ComplexPortal"/>
</dbReference>
<dbReference type="GO" id="GO:0070001">
    <property type="term" value="F:aspartic-type peptidase activity"/>
    <property type="evidence" value="ECO:0000314"/>
    <property type="project" value="ZFIN"/>
</dbReference>
<dbReference type="GO" id="GO:0004197">
    <property type="term" value="F:cysteine-type endopeptidase activity"/>
    <property type="evidence" value="ECO:0000314"/>
    <property type="project" value="ZFIN"/>
</dbReference>
<dbReference type="GO" id="GO:0004175">
    <property type="term" value="F:endopeptidase activity"/>
    <property type="evidence" value="ECO:0000314"/>
    <property type="project" value="ZFIN"/>
</dbReference>
<dbReference type="GO" id="GO:0001530">
    <property type="term" value="F:lipopolysaccharide binding"/>
    <property type="evidence" value="ECO:0000314"/>
    <property type="project" value="ZFIN"/>
</dbReference>
<dbReference type="GO" id="GO:0042742">
    <property type="term" value="P:defense response to bacterium"/>
    <property type="evidence" value="ECO:0000314"/>
    <property type="project" value="ZFIN"/>
</dbReference>
<dbReference type="GO" id="GO:0045087">
    <property type="term" value="P:innate immune response"/>
    <property type="evidence" value="ECO:0007669"/>
    <property type="project" value="UniProtKB-KW"/>
</dbReference>
<dbReference type="GO" id="GO:0002221">
    <property type="term" value="P:pattern recognition receptor signaling pathway"/>
    <property type="evidence" value="ECO:0000303"/>
    <property type="project" value="ComplexPortal"/>
</dbReference>
<dbReference type="GO" id="GO:0043065">
    <property type="term" value="P:positive regulation of apoptotic process"/>
    <property type="evidence" value="ECO:0000314"/>
    <property type="project" value="ZFIN"/>
</dbReference>
<dbReference type="GO" id="GO:0050729">
    <property type="term" value="P:positive regulation of inflammatory response"/>
    <property type="evidence" value="ECO:0000318"/>
    <property type="project" value="GO_Central"/>
</dbReference>
<dbReference type="GO" id="GO:0032731">
    <property type="term" value="P:positive regulation of interleukin-1 beta production"/>
    <property type="evidence" value="ECO:0000303"/>
    <property type="project" value="ComplexPortal"/>
</dbReference>
<dbReference type="GO" id="GO:0043525">
    <property type="term" value="P:positive regulation of neuron apoptotic process"/>
    <property type="evidence" value="ECO:0000318"/>
    <property type="project" value="GO_Central"/>
</dbReference>
<dbReference type="GO" id="GO:0010954">
    <property type="term" value="P:positive regulation of protein processing"/>
    <property type="evidence" value="ECO:0000314"/>
    <property type="project" value="ZFIN"/>
</dbReference>
<dbReference type="GO" id="GO:0140639">
    <property type="term" value="P:positive regulation of pyroptotic inflammatory response"/>
    <property type="evidence" value="ECO:0000314"/>
    <property type="project" value="ZFIN"/>
</dbReference>
<dbReference type="GO" id="GO:0012501">
    <property type="term" value="P:programmed cell death"/>
    <property type="evidence" value="ECO:0007669"/>
    <property type="project" value="UniProtKB-KW"/>
</dbReference>
<dbReference type="GO" id="GO:0070269">
    <property type="term" value="P:pyroptotic inflammatory response"/>
    <property type="evidence" value="ECO:0000314"/>
    <property type="project" value="ZFIN"/>
</dbReference>
<dbReference type="GO" id="GO:0043067">
    <property type="term" value="P:regulation of programmed cell death"/>
    <property type="evidence" value="ECO:0000314"/>
    <property type="project" value="ZFIN"/>
</dbReference>
<dbReference type="GO" id="GO:0097264">
    <property type="term" value="P:self proteolysis"/>
    <property type="evidence" value="ECO:0000314"/>
    <property type="project" value="ZFIN"/>
</dbReference>
<dbReference type="CDD" id="cd00032">
    <property type="entry name" value="CASc"/>
    <property type="match status" value="1"/>
</dbReference>
<dbReference type="CDD" id="cd08321">
    <property type="entry name" value="Pyrin_ASC-like"/>
    <property type="match status" value="1"/>
</dbReference>
<dbReference type="FunFam" id="1.10.533.10:FF:000133">
    <property type="entry name" value="Caspase b"/>
    <property type="match status" value="1"/>
</dbReference>
<dbReference type="FunFam" id="3.40.50.1460:FF:000039">
    <property type="entry name" value="Caspase b"/>
    <property type="match status" value="1"/>
</dbReference>
<dbReference type="Gene3D" id="3.40.50.1460">
    <property type="match status" value="1"/>
</dbReference>
<dbReference type="Gene3D" id="1.10.533.10">
    <property type="entry name" value="Death Domain, Fas"/>
    <property type="match status" value="1"/>
</dbReference>
<dbReference type="InterPro" id="IPR029030">
    <property type="entry name" value="Caspase-like_dom_sf"/>
</dbReference>
<dbReference type="InterPro" id="IPR033139">
    <property type="entry name" value="Caspase_cys_AS"/>
</dbReference>
<dbReference type="InterPro" id="IPR016129">
    <property type="entry name" value="Caspase_his_AS"/>
</dbReference>
<dbReference type="InterPro" id="IPR004020">
    <property type="entry name" value="DAPIN"/>
</dbReference>
<dbReference type="InterPro" id="IPR011029">
    <property type="entry name" value="DEATH-like_dom_sf"/>
</dbReference>
<dbReference type="InterPro" id="IPR002398">
    <property type="entry name" value="Pept_C14"/>
</dbReference>
<dbReference type="InterPro" id="IPR011600">
    <property type="entry name" value="Pept_C14_caspase"/>
</dbReference>
<dbReference type="InterPro" id="IPR002138">
    <property type="entry name" value="Pept_C14_p10"/>
</dbReference>
<dbReference type="InterPro" id="IPR001309">
    <property type="entry name" value="Pept_C14_p20"/>
</dbReference>
<dbReference type="InterPro" id="IPR015917">
    <property type="entry name" value="Pept_C14A"/>
</dbReference>
<dbReference type="PANTHER" id="PTHR47901">
    <property type="entry name" value="CASPASE RECRUITMENT DOMAIN-CONTAINING PROTEIN 18"/>
    <property type="match status" value="1"/>
</dbReference>
<dbReference type="PANTHER" id="PTHR47901:SF3">
    <property type="entry name" value="CASPASE-1"/>
    <property type="match status" value="1"/>
</dbReference>
<dbReference type="Pfam" id="PF00656">
    <property type="entry name" value="Peptidase_C14"/>
    <property type="match status" value="1"/>
</dbReference>
<dbReference type="Pfam" id="PF02758">
    <property type="entry name" value="PYRIN"/>
    <property type="match status" value="1"/>
</dbReference>
<dbReference type="PIRSF" id="PIRSF038001">
    <property type="entry name" value="Caspase_ICE"/>
    <property type="match status" value="1"/>
</dbReference>
<dbReference type="PRINTS" id="PR00376">
    <property type="entry name" value="IL1BCENZYME"/>
</dbReference>
<dbReference type="SMART" id="SM00115">
    <property type="entry name" value="CASc"/>
    <property type="match status" value="1"/>
</dbReference>
<dbReference type="SMART" id="SM01289">
    <property type="entry name" value="PYRIN"/>
    <property type="match status" value="1"/>
</dbReference>
<dbReference type="SUPFAM" id="SSF52129">
    <property type="entry name" value="Caspase-like"/>
    <property type="match status" value="1"/>
</dbReference>
<dbReference type="SUPFAM" id="SSF47986">
    <property type="entry name" value="DEATH domain"/>
    <property type="match status" value="1"/>
</dbReference>
<dbReference type="PROSITE" id="PS01122">
    <property type="entry name" value="CASPASE_CYS"/>
    <property type="match status" value="1"/>
</dbReference>
<dbReference type="PROSITE" id="PS01121">
    <property type="entry name" value="CASPASE_HIS"/>
    <property type="match status" value="1"/>
</dbReference>
<dbReference type="PROSITE" id="PS50207">
    <property type="entry name" value="CASPASE_P10"/>
    <property type="match status" value="1"/>
</dbReference>
<dbReference type="PROSITE" id="PS50208">
    <property type="entry name" value="CASPASE_P20"/>
    <property type="match status" value="1"/>
</dbReference>
<dbReference type="PROSITE" id="PS50824">
    <property type="entry name" value="DAPIN"/>
    <property type="match status" value="1"/>
</dbReference>
<comment type="function">
    <text evidence="2 5 9 10">Thiol protease which cleaves IL-1 beta (il1b), releasing the mature cytokine which is involved in a variety of inflammatory processes, and mediates apoptosis (PubMed:12464617, PubMed:30150286). Component of the NLRP1 inflammasome, which plays a crucial role in innate immunity and inflammation (PubMed:30150286). In response to pathogens and other damage-associated signals, recruited to the NLRP1 inflammasome in its precursor form following the recruitment of caspase caspa (PubMed:30150286). Its subsequent activation causes the cleavage of the midformed pro-il1b and results in il1b maturation and secretion in the extracellular milieu (PubMed:30150286). Activated by direct binding to bacterial lipopolysaccharides (LPS), which causes non-canonical inflammasome activation and results in the pyroptosis of infected cells and their extrusion into the gut lumen, as well as in cytokine secretion (PubMed:30076291). Plays a crucial role in the restriction of bacterial infection to intestinal sites (PubMed:30076291). Pyroptosis limits bacterial replication, while cytokine secretion promotes the recruitment and activation of immune cells and triggers mucosal inflammation (By similarity). Promotes pyroptosis by bacterial infection by E.piscicida (PubMed:30076291).</text>
</comment>
<comment type="catalytic activity">
    <reaction evidence="5 9">
        <text>Strict requirement for Asp at the P1 position. It has a preferred cleavage sequence of Tyr-Val-Ala-Asp-|- but also cleaves at Asp-Glu-Val-Asp-|-.</text>
        <dbReference type="EC" id="3.4.22.58"/>
    </reaction>
</comment>
<comment type="activity regulation">
    <text evidence="9">Activated by homooligomerization induced by direct binding to cytosolic LPS.</text>
</comment>
<comment type="subunit">
    <text evidence="8 9 10 12 13">Upon direct LPS-binding, forms large homooligomers, resulting in its activation (PubMed:30076291). These oligomers are often referred to as 'non-canonical inflammasomes' (PubMed:30076291). Heterotetramer that consists of two anti-parallel arranged heterodimers, each one formed by a 20 kDa (p20) and a 10 kDa (p10) subunit (Probable). Interacts with caspa (PubMed:29791979). Interacts with pycard; the interaction only occurs in the presence of nlrp1 (PubMed:30150286). Component of NLRP1 inflammasomes (PubMed:30150286). Inflammasomes are supramolecular complexes that assemble in the cytosol in response to pathogens and other damage-associated signals and play critical roles in innate immunity and inflammation (PubMed:30150286). The NLRP1 inflammasome is composed of the signal sensor nlrp1, and the adapter pycard (asc), which recruit effector pro-inflammatory caspases caspa and/or caspb (PubMed:30150286). The interaction between nlrp1 and pycard is required for the sequential recruitment of caspa and then caspb (PubMed:30150286). Caspa is preferentially recruited first and this causes the cleavage of pro-il1b into the midformed il1b (PubMed:30150286). This is followed by the recruitment of caspb, which is activated and cleaves the midformed il1b resulting in il1b maturation (PubMed:30150286).</text>
</comment>
<comment type="subcellular location">
    <subcellularLocation>
        <location evidence="10">Inflammasome</location>
    </subcellularLocation>
    <subcellularLocation>
        <location evidence="10">Cytoplasm</location>
    </subcellularLocation>
    <text evidence="10">Co-localizes with pycard, caspa and nlrp1 in the cytoplasm (PubMed:30150286). Co-localizes with pycard at large cytoplasmic aggregates, known as specks (PubMed:30150286).</text>
</comment>
<comment type="tissue specificity">
    <text evidence="9">Expressed in the spleen, kidney and liver, and highly expressed in the gills and gut.</text>
</comment>
<comment type="developmental stage">
    <text evidence="5 6 7 9">During embryonic development, highly expressed at 8 hours post-fertilization (hpf) (PubMed:28402832). Expressed at the pharyngula stage at 24 hpf and expression is maintained for 7 days post-fertilization (PubMed:28402832, PubMed:29791492, PubMed:30076291). During this time, expressed in the pharyngeal arches, and in the epidermis and proctoderm at 48 hpf, and in the epidermis at 72 hpf (PubMed:12464617, PubMed:29791492, PubMed:30076291). Also expressed in the mouth at 48 and 72 hpf (PubMed:12464617, PubMed:30076291).</text>
</comment>
<comment type="induction">
    <text evidence="6 9 10">Up-regulated in response to pentachlorophenol (PCP), a toxic pollutant (PubMed:28402832). Up-regulated in response to bacterial lipopolysaccharides (LPS) and bacterial infection with E.piscicida (PubMed:30076291). Up-regulated in response to bacterial infection with E.tarda (PubMed:30150286).</text>
</comment>
<comment type="domain">
    <text evidence="9">The Pyrin domain mediates LPS recognition and homooligomerization.</text>
</comment>
<comment type="PTM">
    <text evidence="12 13">The two subunits are derived from the precursor sequence by an autocatalytic mechanism.</text>
</comment>
<comment type="disruption phenotype">
    <text evidence="9">Impaired pyroptosis in response to bacterial infection with E.piscicida (PubMed:30076291). Morpholino knockdown results in no observed phenotype (PubMed:30076291). Morpholino knockdown results in impaired gut bacterial clearance following bacterial infection with E.piscicida (PubMed:30076291). Morpholino knockdown results in pericardial edema, erosion of the tail fin and body axis, and impaired up-regulation of il1b, tnfa, il6, il8, il10 and ifng1 cytokines in response to bacterial lipopolysaccharides (LPS) (PubMed:30076291).</text>
</comment>
<comment type="similarity">
    <text evidence="3 4">Belongs to the peptidase C14A family.</text>
</comment>
<sequence>MEDITQLLSDVLEDLVESELKQFTRQLWIGVKPGVEPIPRGKLENKDRQDVVDSMVQQYSEDAGTITVQTLRKIKQNERAKRLESNLLKVQSQGQENKQNSEEPQPIPQIISQPIQQIISQPINNAGSEDLQPIQADWQRPRQIIPCSQETKNTLLKAHGDDIYTPRSGTQRKGLALLITNIQFANTQHNRNGADRDEENAEWLLRSLGFAVIKYRNLSGKDIRRAVENFSKRREHEDADSTFIVIMSHGTRIDNKDAIVGVSDDVYFIEETFSHLNSVNCPALIDKPKVILIQACRGGQSSGVLAQDSVFASDSWVHMEKDFVCFMSTMPNTFAYRNPIEGSFFISYIVDVFCSSAHRDDIMELFRKVTLRMEKDQRFQGQAKLLPCIERTSISKRFYLFPGL</sequence>
<name>CASPB_DANRE</name>
<accession>Q504J1</accession>
<accession>A0A0R4ILD1</accession>
<accession>Q4U0E2</accession>
<accession>Q9DDJ2</accession>
<evidence type="ECO:0000250" key="1">
    <source>
        <dbReference type="UniProtKB" id="P29466"/>
    </source>
</evidence>
<evidence type="ECO:0000250" key="2">
    <source>
        <dbReference type="UniProtKB" id="P49662"/>
    </source>
</evidence>
<evidence type="ECO:0000255" key="3"/>
<evidence type="ECO:0000255" key="4">
    <source>
        <dbReference type="RuleBase" id="RU003971"/>
    </source>
</evidence>
<evidence type="ECO:0000269" key="5">
    <source>
    </source>
</evidence>
<evidence type="ECO:0000269" key="6">
    <source>
    </source>
</evidence>
<evidence type="ECO:0000269" key="7">
    <source>
    </source>
</evidence>
<evidence type="ECO:0000269" key="8">
    <source>
    </source>
</evidence>
<evidence type="ECO:0000269" key="9">
    <source>
    </source>
</evidence>
<evidence type="ECO:0000269" key="10">
    <source>
    </source>
</evidence>
<evidence type="ECO:0000305" key="11"/>
<evidence type="ECO:0000305" key="12">
    <source>
    </source>
</evidence>
<evidence type="ECO:0000305" key="13">
    <source>
    </source>
</evidence>
<evidence type="ECO:0000312" key="14">
    <source>
        <dbReference type="EMBL" id="AAG45230.1"/>
    </source>
</evidence>
<evidence type="ECO:0000312" key="15">
    <source>
        <dbReference type="EMBL" id="AAH95000.1"/>
    </source>
</evidence>
<evidence type="ECO:0000312" key="16">
    <source>
        <dbReference type="EMBL" id="AAY44398.1"/>
    </source>
</evidence>
<evidence type="ECO:0000312" key="17">
    <source>
        <dbReference type="EMBL" id="AWP39899.1"/>
    </source>
</evidence>
<evidence type="ECO:0000312" key="18">
    <source>
        <dbReference type="Proteomes" id="UP000000437"/>
    </source>
</evidence>
<evidence type="ECO:0000312" key="19">
    <source>
        <dbReference type="ZFIN" id="ZDB-GENE-020812-1"/>
    </source>
</evidence>
<gene>
    <name evidence="19" type="primary">caspb</name>
    <name evidence="19" type="synonym">casp19a</name>
    <name evidence="19" type="synonym">caspy2</name>
</gene>
<protein>
    <recommendedName>
        <fullName evidence="19">Caspase b</fullName>
        <ecNumber evidence="5 9">3.4.22.58</ecNumber>
    </recommendedName>
    <alternativeName>
        <fullName evidence="17">Caspase 19a</fullName>
    </alternativeName>
    <component>
        <recommendedName>
            <fullName evidence="12 13">Caspase b subunit p20</fullName>
        </recommendedName>
    </component>
    <component>
        <recommendedName>
            <fullName evidence="12 13">Caspase b subunit p10</fullName>
        </recommendedName>
    </component>
</protein>
<organism evidence="15">
    <name type="scientific">Danio rerio</name>
    <name type="common">Zebrafish</name>
    <name type="synonym">Brachydanio rerio</name>
    <dbReference type="NCBI Taxonomy" id="7955"/>
    <lineage>
        <taxon>Eukaryota</taxon>
        <taxon>Metazoa</taxon>
        <taxon>Chordata</taxon>
        <taxon>Craniata</taxon>
        <taxon>Vertebrata</taxon>
        <taxon>Euteleostomi</taxon>
        <taxon>Actinopterygii</taxon>
        <taxon>Neopterygii</taxon>
        <taxon>Teleostei</taxon>
        <taxon>Ostariophysi</taxon>
        <taxon>Cypriniformes</taxon>
        <taxon>Danionidae</taxon>
        <taxon>Danioninae</taxon>
        <taxon>Danio</taxon>
    </lineage>
</organism>
<reference evidence="17" key="1">
    <citation type="journal article" date="2018" name="PLoS ONE">
        <title>Characterization of the caspase family in zebrafish.</title>
        <authorList>
            <person name="Spead O."/>
            <person name="Verreet T."/>
            <person name="Donelson C.J."/>
            <person name="Poulain F.E."/>
        </authorList>
    </citation>
    <scope>NUCLEOTIDE SEQUENCE [MRNA]</scope>
    <scope>DEVELOPMENTAL STAGE</scope>
</reference>
<reference evidence="14" key="2">
    <citation type="journal article" date="2000" name="Cell Death Differ.">
        <title>Genes with homology to mammalian apoptosis regulators identified in zebrafish.</title>
        <authorList>
            <person name="Inohara N."/>
            <person name="Nunez G."/>
        </authorList>
    </citation>
    <scope>NUCLEOTIDE SEQUENCE [MRNA]</scope>
</reference>
<reference evidence="16" key="3">
    <citation type="submission" date="2005-05" db="EMBL/GenBank/DDBJ databases">
        <title>Caspyb, a zebrafish caspase can induce cell apoptosis.</title>
        <authorList>
            <person name="Deng H.-X."/>
            <person name="Liu L."/>
            <person name="Wei Y.-Q."/>
            <person name="Zhao X."/>
        </authorList>
    </citation>
    <scope>NUCLEOTIDE SEQUENCE [MRNA]</scope>
    <source>
        <strain evidence="16">Tuebingen</strain>
    </source>
</reference>
<reference evidence="18" key="4">
    <citation type="journal article" date="2013" name="Nature">
        <title>The zebrafish reference genome sequence and its relationship to the human genome.</title>
        <authorList>
            <person name="Howe K."/>
            <person name="Clark M.D."/>
            <person name="Torroja C.F."/>
            <person name="Torrance J."/>
            <person name="Berthelot C."/>
            <person name="Muffato M."/>
            <person name="Collins J.E."/>
            <person name="Humphray S."/>
            <person name="McLaren K."/>
            <person name="Matthews L."/>
            <person name="McLaren S."/>
            <person name="Sealy I."/>
            <person name="Caccamo M."/>
            <person name="Churcher C."/>
            <person name="Scott C."/>
            <person name="Barrett J.C."/>
            <person name="Koch R."/>
            <person name="Rauch G.J."/>
            <person name="White S."/>
            <person name="Chow W."/>
            <person name="Kilian B."/>
            <person name="Quintais L.T."/>
            <person name="Guerra-Assuncao J.A."/>
            <person name="Zhou Y."/>
            <person name="Gu Y."/>
            <person name="Yen J."/>
            <person name="Vogel J.H."/>
            <person name="Eyre T."/>
            <person name="Redmond S."/>
            <person name="Banerjee R."/>
            <person name="Chi J."/>
            <person name="Fu B."/>
            <person name="Langley E."/>
            <person name="Maguire S.F."/>
            <person name="Laird G.K."/>
            <person name="Lloyd D."/>
            <person name="Kenyon E."/>
            <person name="Donaldson S."/>
            <person name="Sehra H."/>
            <person name="Almeida-King J."/>
            <person name="Loveland J."/>
            <person name="Trevanion S."/>
            <person name="Jones M."/>
            <person name="Quail M."/>
            <person name="Willey D."/>
            <person name="Hunt A."/>
            <person name="Burton J."/>
            <person name="Sims S."/>
            <person name="McLay K."/>
            <person name="Plumb B."/>
            <person name="Davis J."/>
            <person name="Clee C."/>
            <person name="Oliver K."/>
            <person name="Clark R."/>
            <person name="Riddle C."/>
            <person name="Elliot D."/>
            <person name="Threadgold G."/>
            <person name="Harden G."/>
            <person name="Ware D."/>
            <person name="Begum S."/>
            <person name="Mortimore B."/>
            <person name="Kerry G."/>
            <person name="Heath P."/>
            <person name="Phillimore B."/>
            <person name="Tracey A."/>
            <person name="Corby N."/>
            <person name="Dunn M."/>
            <person name="Johnson C."/>
            <person name="Wood J."/>
            <person name="Clark S."/>
            <person name="Pelan S."/>
            <person name="Griffiths G."/>
            <person name="Smith M."/>
            <person name="Glithero R."/>
            <person name="Howden P."/>
            <person name="Barker N."/>
            <person name="Lloyd C."/>
            <person name="Stevens C."/>
            <person name="Harley J."/>
            <person name="Holt K."/>
            <person name="Panagiotidis G."/>
            <person name="Lovell J."/>
            <person name="Beasley H."/>
            <person name="Henderson C."/>
            <person name="Gordon D."/>
            <person name="Auger K."/>
            <person name="Wright D."/>
            <person name="Collins J."/>
            <person name="Raisen C."/>
            <person name="Dyer L."/>
            <person name="Leung K."/>
            <person name="Robertson L."/>
            <person name="Ambridge K."/>
            <person name="Leongamornlert D."/>
            <person name="McGuire S."/>
            <person name="Gilderthorp R."/>
            <person name="Griffiths C."/>
            <person name="Manthravadi D."/>
            <person name="Nichol S."/>
            <person name="Barker G."/>
            <person name="Whitehead S."/>
            <person name="Kay M."/>
            <person name="Brown J."/>
            <person name="Murnane C."/>
            <person name="Gray E."/>
            <person name="Humphries M."/>
            <person name="Sycamore N."/>
            <person name="Barker D."/>
            <person name="Saunders D."/>
            <person name="Wallis J."/>
            <person name="Babbage A."/>
            <person name="Hammond S."/>
            <person name="Mashreghi-Mohammadi M."/>
            <person name="Barr L."/>
            <person name="Martin S."/>
            <person name="Wray P."/>
            <person name="Ellington A."/>
            <person name="Matthews N."/>
            <person name="Ellwood M."/>
            <person name="Woodmansey R."/>
            <person name="Clark G."/>
            <person name="Cooper J."/>
            <person name="Tromans A."/>
            <person name="Grafham D."/>
            <person name="Skuce C."/>
            <person name="Pandian R."/>
            <person name="Andrews R."/>
            <person name="Harrison E."/>
            <person name="Kimberley A."/>
            <person name="Garnett J."/>
            <person name="Fosker N."/>
            <person name="Hall R."/>
            <person name="Garner P."/>
            <person name="Kelly D."/>
            <person name="Bird C."/>
            <person name="Palmer S."/>
            <person name="Gehring I."/>
            <person name="Berger A."/>
            <person name="Dooley C.M."/>
            <person name="Ersan-Urun Z."/>
            <person name="Eser C."/>
            <person name="Geiger H."/>
            <person name="Geisler M."/>
            <person name="Karotki L."/>
            <person name="Kirn A."/>
            <person name="Konantz J."/>
            <person name="Konantz M."/>
            <person name="Oberlander M."/>
            <person name="Rudolph-Geiger S."/>
            <person name="Teucke M."/>
            <person name="Lanz C."/>
            <person name="Raddatz G."/>
            <person name="Osoegawa K."/>
            <person name="Zhu B."/>
            <person name="Rapp A."/>
            <person name="Widaa S."/>
            <person name="Langford C."/>
            <person name="Yang F."/>
            <person name="Schuster S.C."/>
            <person name="Carter N.P."/>
            <person name="Harrow J."/>
            <person name="Ning Z."/>
            <person name="Herrero J."/>
            <person name="Searle S.M."/>
            <person name="Enright A."/>
            <person name="Geisler R."/>
            <person name="Plasterk R.H."/>
            <person name="Lee C."/>
            <person name="Westerfield M."/>
            <person name="de Jong P.J."/>
            <person name="Zon L.I."/>
            <person name="Postlethwait J.H."/>
            <person name="Nusslein-Volhard C."/>
            <person name="Hubbard T.J."/>
            <person name="Roest Crollius H."/>
            <person name="Rogers J."/>
            <person name="Stemple D.L."/>
        </authorList>
    </citation>
    <scope>NUCLEOTIDE SEQUENCE [LARGE SCALE GENOMIC DNA]</scope>
    <source>
        <strain evidence="18">Tuebingen</strain>
    </source>
</reference>
<reference evidence="15" key="5">
    <citation type="submission" date="2005-05" db="EMBL/GenBank/DDBJ databases">
        <authorList>
            <consortium name="NIH - Zebrafish Gene Collection (ZGC) project"/>
        </authorList>
    </citation>
    <scope>NUCLEOTIDE SEQUENCE [LARGE SCALE MRNA]</scope>
    <source>
        <tissue evidence="15">Larva</tissue>
    </source>
</reference>
<reference evidence="11" key="6">
    <citation type="journal article" date="2003" name="J. Biol. Chem.">
        <title>Caspy, a zebrafish caspase, activated by ASC oligomerization is required for pharyngeal arch development.</title>
        <authorList>
            <person name="Masumoto J."/>
            <person name="Zhou W."/>
            <person name="Chen F.F."/>
            <person name="Su F."/>
            <person name="Kuwada J.Y."/>
            <person name="Hidaka E."/>
            <person name="Katsuyama T."/>
            <person name="Sagara J."/>
            <person name="Taniguchi S."/>
            <person name="Ngo-Hazelett P."/>
            <person name="Postlethwait J.H."/>
            <person name="Nunez G."/>
            <person name="Inohara N."/>
        </authorList>
    </citation>
    <scope>FUNCTION</scope>
    <scope>CATALYTIC ACTIVITY</scope>
    <scope>DEVELOPMENTAL STAGE</scope>
</reference>
<reference evidence="11" key="7">
    <citation type="journal article" date="2017" name="Chemosphere">
        <title>Early developmental exposure to pentachlorophenol causes alterations on mRNA expressions of caspase protease family in zebrafish embryos.</title>
        <authorList>
            <person name="Zhao J."/>
            <person name="Huang G."/>
            <person name="Xu T."/>
            <person name="Yin D."/>
            <person name="Bai J."/>
            <person name="Gu W."/>
        </authorList>
    </citation>
    <scope>DEVELOPMENTAL STAGE</scope>
    <scope>INDUCTION BY PENTACHLOROPHENOL</scope>
</reference>
<reference evidence="11" key="8">
    <citation type="journal article" date="2018" name="FEBS J.">
        <title>Functional and structural characterization of zebrafish ASC.</title>
        <authorList>
            <person name="Li Y."/>
            <person name="Huang Y."/>
            <person name="Cao X."/>
            <person name="Yin X."/>
            <person name="Jin X."/>
            <person name="Liu S."/>
            <person name="Jiang J."/>
            <person name="Jiang W."/>
            <person name="Xiao T.S."/>
            <person name="Zhou R."/>
            <person name="Cai G."/>
            <person name="Hu B."/>
            <person name="Jin T."/>
        </authorList>
    </citation>
    <scope>INTERACTION WITH CASPA</scope>
</reference>
<reference evidence="11" key="9">
    <citation type="journal article" date="2018" name="J. Immunol.">
        <title>Characterization of an NLRP1 Inflammasome from Zebrafish Reveals a Unique Sequential Activation Mechanism Underlying Inflammatory Caspases in Ancient Vertebrates.</title>
        <authorList>
            <person name="Li J.Y."/>
            <person name="Gao K."/>
            <person name="Shao T."/>
            <person name="Fan D.D."/>
            <person name="Hu C.B."/>
            <person name="Sun C.C."/>
            <person name="Dong W.R."/>
            <person name="Lin A.F."/>
            <person name="Xiang L.X."/>
            <person name="Shao J.Z."/>
        </authorList>
    </citation>
    <scope>FUNCTION</scope>
    <scope>PROTEOLYTIC CLEAVAGE</scope>
    <scope>IDENTIFICATION IN NLRP1 INFLAMMASOME</scope>
    <scope>INTERACTION WITH PYCARD</scope>
    <scope>SUBCELLULAR LOCATION</scope>
    <scope>INDUCTION BY E.TARDA</scope>
</reference>
<reference evidence="11" key="10">
    <citation type="journal article" date="2018" name="Nat. Commun.">
        <title>Sensing of cytosolic LPS through caspy2 pyrin domain mediates noncanonical inflammasome activation in zebrafish.</title>
        <authorList>
            <person name="Yang D."/>
            <person name="Zheng X."/>
            <person name="Chen S."/>
            <person name="Wang Z."/>
            <person name="Xu W."/>
            <person name="Tan J."/>
            <person name="Hu T."/>
            <person name="Hou M."/>
            <person name="Wang W."/>
            <person name="Gu Z."/>
            <person name="Wang Q."/>
            <person name="Zhang R."/>
            <person name="Zhang Y."/>
            <person name="Liu Q."/>
        </authorList>
    </citation>
    <scope>FUNCTION</scope>
    <scope>CATALYTIC ACTIVITY</scope>
    <scope>ACTIVE SITE</scope>
    <scope>ACTIVITY REGULATION</scope>
    <scope>SUBUNIT</scope>
    <scope>TISSUE SPECIFICITY</scope>
    <scope>DEVELOPMENTAL STAGE</scope>
    <scope>INDUCTION BY LPS AND E.PISCICIDA</scope>
    <scope>DOMAIN</scope>
    <scope>PROTEOLYTIC CLEAVAGE</scope>
    <scope>DISRUPTION PHENOTYPE</scope>
    <scope>MUTAGENESIS OF CYS-296</scope>
</reference>
<proteinExistence type="evidence at protein level"/>